<protein>
    <recommendedName>
        <fullName evidence="1">Serine hydroxymethyltransferase 3</fullName>
        <shortName evidence="1">SHMT 3</shortName>
        <shortName evidence="1">Serine methylase 3</shortName>
        <ecNumber evidence="1">2.1.2.1</ecNumber>
    </recommendedName>
</protein>
<dbReference type="EC" id="2.1.2.1" evidence="1"/>
<dbReference type="EMBL" id="CP000094">
    <property type="protein sequence ID" value="ABA76945.1"/>
    <property type="molecule type" value="Genomic_DNA"/>
</dbReference>
<dbReference type="SMR" id="Q3K5K9"/>
<dbReference type="KEGG" id="pfo:Pfl01_5208"/>
<dbReference type="eggNOG" id="COG0112">
    <property type="taxonomic scope" value="Bacteria"/>
</dbReference>
<dbReference type="HOGENOM" id="CLU_022477_2_1_6"/>
<dbReference type="UniPathway" id="UPA00193"/>
<dbReference type="UniPathway" id="UPA00288">
    <property type="reaction ID" value="UER01023"/>
</dbReference>
<dbReference type="Proteomes" id="UP000002704">
    <property type="component" value="Chromosome"/>
</dbReference>
<dbReference type="GO" id="GO:0005829">
    <property type="term" value="C:cytosol"/>
    <property type="evidence" value="ECO:0007669"/>
    <property type="project" value="TreeGrafter"/>
</dbReference>
<dbReference type="GO" id="GO:0004372">
    <property type="term" value="F:glycine hydroxymethyltransferase activity"/>
    <property type="evidence" value="ECO:0007669"/>
    <property type="project" value="UniProtKB-UniRule"/>
</dbReference>
<dbReference type="GO" id="GO:0030170">
    <property type="term" value="F:pyridoxal phosphate binding"/>
    <property type="evidence" value="ECO:0007669"/>
    <property type="project" value="UniProtKB-UniRule"/>
</dbReference>
<dbReference type="GO" id="GO:0019264">
    <property type="term" value="P:glycine biosynthetic process from serine"/>
    <property type="evidence" value="ECO:0007669"/>
    <property type="project" value="UniProtKB-UniRule"/>
</dbReference>
<dbReference type="GO" id="GO:0035999">
    <property type="term" value="P:tetrahydrofolate interconversion"/>
    <property type="evidence" value="ECO:0007669"/>
    <property type="project" value="UniProtKB-UniRule"/>
</dbReference>
<dbReference type="CDD" id="cd00378">
    <property type="entry name" value="SHMT"/>
    <property type="match status" value="1"/>
</dbReference>
<dbReference type="FunFam" id="3.40.640.10:FF:000001">
    <property type="entry name" value="Serine hydroxymethyltransferase"/>
    <property type="match status" value="1"/>
</dbReference>
<dbReference type="FunFam" id="3.90.1150.10:FF:000003">
    <property type="entry name" value="Serine hydroxymethyltransferase"/>
    <property type="match status" value="1"/>
</dbReference>
<dbReference type="Gene3D" id="3.90.1150.10">
    <property type="entry name" value="Aspartate Aminotransferase, domain 1"/>
    <property type="match status" value="1"/>
</dbReference>
<dbReference type="Gene3D" id="3.40.640.10">
    <property type="entry name" value="Type I PLP-dependent aspartate aminotransferase-like (Major domain)"/>
    <property type="match status" value="1"/>
</dbReference>
<dbReference type="HAMAP" id="MF_00051">
    <property type="entry name" value="SHMT"/>
    <property type="match status" value="1"/>
</dbReference>
<dbReference type="InterPro" id="IPR015424">
    <property type="entry name" value="PyrdxlP-dep_Trfase"/>
</dbReference>
<dbReference type="InterPro" id="IPR015421">
    <property type="entry name" value="PyrdxlP-dep_Trfase_major"/>
</dbReference>
<dbReference type="InterPro" id="IPR015422">
    <property type="entry name" value="PyrdxlP-dep_Trfase_small"/>
</dbReference>
<dbReference type="InterPro" id="IPR001085">
    <property type="entry name" value="Ser_HO-MeTrfase"/>
</dbReference>
<dbReference type="InterPro" id="IPR049943">
    <property type="entry name" value="Ser_HO-MeTrfase-like"/>
</dbReference>
<dbReference type="InterPro" id="IPR019798">
    <property type="entry name" value="Ser_HO-MeTrfase_PLP_BS"/>
</dbReference>
<dbReference type="InterPro" id="IPR039429">
    <property type="entry name" value="SHMT-like_dom"/>
</dbReference>
<dbReference type="NCBIfam" id="NF000586">
    <property type="entry name" value="PRK00011.1"/>
    <property type="match status" value="1"/>
</dbReference>
<dbReference type="PANTHER" id="PTHR11680">
    <property type="entry name" value="SERINE HYDROXYMETHYLTRANSFERASE"/>
    <property type="match status" value="1"/>
</dbReference>
<dbReference type="PANTHER" id="PTHR11680:SF50">
    <property type="entry name" value="SERINE HYDROXYMETHYLTRANSFERASE"/>
    <property type="match status" value="1"/>
</dbReference>
<dbReference type="Pfam" id="PF00464">
    <property type="entry name" value="SHMT"/>
    <property type="match status" value="1"/>
</dbReference>
<dbReference type="PIRSF" id="PIRSF000412">
    <property type="entry name" value="SHMT"/>
    <property type="match status" value="1"/>
</dbReference>
<dbReference type="SUPFAM" id="SSF53383">
    <property type="entry name" value="PLP-dependent transferases"/>
    <property type="match status" value="1"/>
</dbReference>
<dbReference type="PROSITE" id="PS00096">
    <property type="entry name" value="SHMT"/>
    <property type="match status" value="1"/>
</dbReference>
<accession>Q3K5K9</accession>
<proteinExistence type="inferred from homology"/>
<gene>
    <name evidence="1" type="primary">glyA3</name>
    <name type="ordered locus">Pfl01_5208</name>
</gene>
<keyword id="KW-0028">Amino-acid biosynthesis</keyword>
<keyword id="KW-0963">Cytoplasm</keyword>
<keyword id="KW-0554">One-carbon metabolism</keyword>
<keyword id="KW-0663">Pyridoxal phosphate</keyword>
<keyword id="KW-0808">Transferase</keyword>
<feature type="chain" id="PRO_0000235006" description="Serine hydroxymethyltransferase 3">
    <location>
        <begin position="1"/>
        <end position="417"/>
    </location>
</feature>
<feature type="binding site" evidence="1">
    <location>
        <position position="121"/>
    </location>
    <ligand>
        <name>(6S)-5,6,7,8-tetrahydrofolate</name>
        <dbReference type="ChEBI" id="CHEBI:57453"/>
    </ligand>
</feature>
<feature type="binding site" evidence="1">
    <location>
        <begin position="125"/>
        <end position="127"/>
    </location>
    <ligand>
        <name>(6S)-5,6,7,8-tetrahydrofolate</name>
        <dbReference type="ChEBI" id="CHEBI:57453"/>
    </ligand>
</feature>
<feature type="binding site" evidence="1">
    <location>
        <begin position="355"/>
        <end position="357"/>
    </location>
    <ligand>
        <name>(6S)-5,6,7,8-tetrahydrofolate</name>
        <dbReference type="ChEBI" id="CHEBI:57453"/>
    </ligand>
</feature>
<feature type="site" description="Plays an important role in substrate specificity" evidence="1">
    <location>
        <position position="229"/>
    </location>
</feature>
<feature type="modified residue" description="N6-(pyridoxal phosphate)lysine" evidence="1">
    <location>
        <position position="230"/>
    </location>
</feature>
<organism>
    <name type="scientific">Pseudomonas fluorescens (strain Pf0-1)</name>
    <dbReference type="NCBI Taxonomy" id="205922"/>
    <lineage>
        <taxon>Bacteria</taxon>
        <taxon>Pseudomonadati</taxon>
        <taxon>Pseudomonadota</taxon>
        <taxon>Gammaproteobacteria</taxon>
        <taxon>Pseudomonadales</taxon>
        <taxon>Pseudomonadaceae</taxon>
        <taxon>Pseudomonas</taxon>
    </lineage>
</organism>
<name>GLYA3_PSEPF</name>
<reference key="1">
    <citation type="journal article" date="2009" name="Genome Biol.">
        <title>Genomic and genetic analyses of diversity and plant interactions of Pseudomonas fluorescens.</title>
        <authorList>
            <person name="Silby M.W."/>
            <person name="Cerdeno-Tarraga A.M."/>
            <person name="Vernikos G.S."/>
            <person name="Giddens S.R."/>
            <person name="Jackson R.W."/>
            <person name="Preston G.M."/>
            <person name="Zhang X.-X."/>
            <person name="Moon C.D."/>
            <person name="Gehrig S.M."/>
            <person name="Godfrey S.A.C."/>
            <person name="Knight C.G."/>
            <person name="Malone J.G."/>
            <person name="Robinson Z."/>
            <person name="Spiers A.J."/>
            <person name="Harris S."/>
            <person name="Challis G.L."/>
            <person name="Yaxley A.M."/>
            <person name="Harris D."/>
            <person name="Seeger K."/>
            <person name="Murphy L."/>
            <person name="Rutter S."/>
            <person name="Squares R."/>
            <person name="Quail M.A."/>
            <person name="Saunders E."/>
            <person name="Mavromatis K."/>
            <person name="Brettin T.S."/>
            <person name="Bentley S.D."/>
            <person name="Hothersall J."/>
            <person name="Stephens E."/>
            <person name="Thomas C.M."/>
            <person name="Parkhill J."/>
            <person name="Levy S.B."/>
            <person name="Rainey P.B."/>
            <person name="Thomson N.R."/>
        </authorList>
    </citation>
    <scope>NUCLEOTIDE SEQUENCE [LARGE SCALE GENOMIC DNA]</scope>
    <source>
        <strain>Pf0-1</strain>
    </source>
</reference>
<comment type="function">
    <text evidence="1">Catalyzes the reversible interconversion of serine and glycine with tetrahydrofolate (THF) serving as the one-carbon carrier. This reaction serves as the major source of one-carbon groups required for the biosynthesis of purines, thymidylate, methionine, and other important biomolecules. Also exhibits THF-independent aldolase activity toward beta-hydroxyamino acids, producing glycine and aldehydes, via a retro-aldol mechanism.</text>
</comment>
<comment type="catalytic activity">
    <reaction evidence="1">
        <text>(6R)-5,10-methylene-5,6,7,8-tetrahydrofolate + glycine + H2O = (6S)-5,6,7,8-tetrahydrofolate + L-serine</text>
        <dbReference type="Rhea" id="RHEA:15481"/>
        <dbReference type="ChEBI" id="CHEBI:15377"/>
        <dbReference type="ChEBI" id="CHEBI:15636"/>
        <dbReference type="ChEBI" id="CHEBI:33384"/>
        <dbReference type="ChEBI" id="CHEBI:57305"/>
        <dbReference type="ChEBI" id="CHEBI:57453"/>
        <dbReference type="EC" id="2.1.2.1"/>
    </reaction>
</comment>
<comment type="cofactor">
    <cofactor evidence="1">
        <name>pyridoxal 5'-phosphate</name>
        <dbReference type="ChEBI" id="CHEBI:597326"/>
    </cofactor>
</comment>
<comment type="pathway">
    <text evidence="1">One-carbon metabolism; tetrahydrofolate interconversion.</text>
</comment>
<comment type="pathway">
    <text evidence="1">Amino-acid biosynthesis; glycine biosynthesis; glycine from L-serine: step 1/1.</text>
</comment>
<comment type="subunit">
    <text evidence="1">Homodimer.</text>
</comment>
<comment type="subcellular location">
    <subcellularLocation>
        <location evidence="1">Cytoplasm</location>
    </subcellularLocation>
</comment>
<comment type="similarity">
    <text evidence="1">Belongs to the SHMT family.</text>
</comment>
<evidence type="ECO:0000255" key="1">
    <source>
        <dbReference type="HAMAP-Rule" id="MF_00051"/>
    </source>
</evidence>
<sequence>MFSKQDQIQGYDDALLAAMNAEEQRQEDHIELIASENYTSKRVMQAQGSGLTNKYAEGYPGKRYYGGCEHVDKVEALAIERAKQLFGADYANVQPHSGSSANSAVYLALLQAGDTILGMSLAHGGHLTHGAKVSSSGKLYNAVQYGIDTKTGLIDYDEVERLAVECKPKMIVAGFSAYSKTLDFPRFRQIADKVGALLFVDMAHVAGLVAAGLYPNPLPYADVVTTTTHKTLRGPRGGLILAKANEEIEKKLNAAVFPGAQGGPLMHVIAGKAVCFKEALEPGFKAYQQQVIDNAQAMASVFIKRGYDVVSGGTDNHLFLVSLIRQGLTGKDADAALGRAHITVNKNAVPNDPQSPFVTSGLRIGTPAVTTRGFKVTQCVTLAGWICDILDNLGDADVEANVAQQVSALCADFPVYR</sequence>